<accession>B0UVZ4</accession>
<name>RLMM_HISS2</name>
<proteinExistence type="inferred from homology"/>
<comment type="function">
    <text evidence="1">Catalyzes the 2'-O-methylation at nucleotide C2498 in 23S rRNA.</text>
</comment>
<comment type="catalytic activity">
    <reaction evidence="1">
        <text>cytidine(2498) in 23S rRNA + S-adenosyl-L-methionine = 2'-O-methylcytidine(2498) in 23S rRNA + S-adenosyl-L-homocysteine + H(+)</text>
        <dbReference type="Rhea" id="RHEA:42788"/>
        <dbReference type="Rhea" id="RHEA-COMP:10244"/>
        <dbReference type="Rhea" id="RHEA-COMP:10245"/>
        <dbReference type="ChEBI" id="CHEBI:15378"/>
        <dbReference type="ChEBI" id="CHEBI:57856"/>
        <dbReference type="ChEBI" id="CHEBI:59789"/>
        <dbReference type="ChEBI" id="CHEBI:74495"/>
        <dbReference type="ChEBI" id="CHEBI:82748"/>
        <dbReference type="EC" id="2.1.1.186"/>
    </reaction>
</comment>
<comment type="subunit">
    <text evidence="1">Monomer.</text>
</comment>
<comment type="subcellular location">
    <subcellularLocation>
        <location evidence="1">Cytoplasm</location>
    </subcellularLocation>
</comment>
<comment type="similarity">
    <text evidence="1">Belongs to the class I-like SAM-binding methyltransferase superfamily. RNA methyltransferase RlmE family. RlmM subfamily.</text>
</comment>
<feature type="chain" id="PRO_1000087734" description="Ribosomal RNA large subunit methyltransferase M">
    <location>
        <begin position="1"/>
        <end position="361"/>
    </location>
</feature>
<feature type="active site" description="Proton acceptor" evidence="1">
    <location>
        <position position="312"/>
    </location>
</feature>
<feature type="binding site" evidence="1">
    <location>
        <position position="193"/>
    </location>
    <ligand>
        <name>S-adenosyl-L-methionine</name>
        <dbReference type="ChEBI" id="CHEBI:59789"/>
    </ligand>
</feature>
<feature type="binding site" evidence="1">
    <location>
        <begin position="226"/>
        <end position="229"/>
    </location>
    <ligand>
        <name>S-adenosyl-L-methionine</name>
        <dbReference type="ChEBI" id="CHEBI:59789"/>
    </ligand>
</feature>
<feature type="binding site" evidence="1">
    <location>
        <position position="245"/>
    </location>
    <ligand>
        <name>S-adenosyl-L-methionine</name>
        <dbReference type="ChEBI" id="CHEBI:59789"/>
    </ligand>
</feature>
<feature type="binding site" evidence="1">
    <location>
        <position position="265"/>
    </location>
    <ligand>
        <name>S-adenosyl-L-methionine</name>
        <dbReference type="ChEBI" id="CHEBI:59789"/>
    </ligand>
</feature>
<feature type="binding site" evidence="1">
    <location>
        <position position="283"/>
    </location>
    <ligand>
        <name>S-adenosyl-L-methionine</name>
        <dbReference type="ChEBI" id="CHEBI:59789"/>
    </ligand>
</feature>
<reference key="1">
    <citation type="submission" date="2008-02" db="EMBL/GenBank/DDBJ databases">
        <title>Complete sequence of Haemophilus somnus 2336.</title>
        <authorList>
            <consortium name="US DOE Joint Genome Institute"/>
            <person name="Siddaramappa S."/>
            <person name="Duncan A.J."/>
            <person name="Challacombe J.F."/>
            <person name="Rainey D."/>
            <person name="Gillaspy A.F."/>
            <person name="Carson M."/>
            <person name="Gipson J."/>
            <person name="Gipson M."/>
            <person name="Bruce D."/>
            <person name="Detter J.C."/>
            <person name="Han C.S."/>
            <person name="Land M."/>
            <person name="Tapia R."/>
            <person name="Thompson L.S."/>
            <person name="Orvis J."/>
            <person name="Zaitshik J."/>
            <person name="Barnes G."/>
            <person name="Brettin T.S."/>
            <person name="Dyer D.W."/>
            <person name="Inzana T.J."/>
        </authorList>
    </citation>
    <scope>NUCLEOTIDE SEQUENCE [LARGE SCALE GENOMIC DNA]</scope>
    <source>
        <strain>2336</strain>
    </source>
</reference>
<organism>
    <name type="scientific">Histophilus somni (strain 2336)</name>
    <name type="common">Haemophilus somnus</name>
    <dbReference type="NCBI Taxonomy" id="228400"/>
    <lineage>
        <taxon>Bacteria</taxon>
        <taxon>Pseudomonadati</taxon>
        <taxon>Pseudomonadota</taxon>
        <taxon>Gammaproteobacteria</taxon>
        <taxon>Pasteurellales</taxon>
        <taxon>Pasteurellaceae</taxon>
        <taxon>Histophilus</taxon>
    </lineage>
</organism>
<protein>
    <recommendedName>
        <fullName evidence="1">Ribosomal RNA large subunit methyltransferase M</fullName>
        <ecNumber evidence="1">2.1.1.186</ecNumber>
    </recommendedName>
    <alternativeName>
        <fullName evidence="1">23S rRNA (cytidine2498-2'-O)-methyltransferase</fullName>
    </alternativeName>
    <alternativeName>
        <fullName evidence="1">23S rRNA 2'-O-ribose methyltransferase RlmM</fullName>
    </alternativeName>
</protein>
<keyword id="KW-0963">Cytoplasm</keyword>
<keyword id="KW-0489">Methyltransferase</keyword>
<keyword id="KW-0698">rRNA processing</keyword>
<keyword id="KW-0949">S-adenosyl-L-methionine</keyword>
<keyword id="KW-0808">Transferase</keyword>
<gene>
    <name evidence="1" type="primary">rlmM</name>
    <name type="ordered locus">HSM_1775</name>
</gene>
<evidence type="ECO:0000255" key="1">
    <source>
        <dbReference type="HAMAP-Rule" id="MF_01551"/>
    </source>
</evidence>
<dbReference type="EC" id="2.1.1.186" evidence="1"/>
<dbReference type="EMBL" id="CP000947">
    <property type="protein sequence ID" value="ACA31557.1"/>
    <property type="molecule type" value="Genomic_DNA"/>
</dbReference>
<dbReference type="RefSeq" id="WP_012340880.1">
    <property type="nucleotide sequence ID" value="NC_010519.1"/>
</dbReference>
<dbReference type="SMR" id="B0UVZ4"/>
<dbReference type="STRING" id="228400.HSM_1775"/>
<dbReference type="GeneID" id="31488082"/>
<dbReference type="KEGG" id="hsm:HSM_1775"/>
<dbReference type="HOGENOM" id="CLU_043780_0_0_6"/>
<dbReference type="GO" id="GO:0005737">
    <property type="term" value="C:cytoplasm"/>
    <property type="evidence" value="ECO:0007669"/>
    <property type="project" value="UniProtKB-SubCell"/>
</dbReference>
<dbReference type="GO" id="GO:0008757">
    <property type="term" value="F:S-adenosylmethionine-dependent methyltransferase activity"/>
    <property type="evidence" value="ECO:0007669"/>
    <property type="project" value="UniProtKB-UniRule"/>
</dbReference>
<dbReference type="GO" id="GO:0032259">
    <property type="term" value="P:methylation"/>
    <property type="evidence" value="ECO:0007669"/>
    <property type="project" value="UniProtKB-KW"/>
</dbReference>
<dbReference type="GO" id="GO:0006364">
    <property type="term" value="P:rRNA processing"/>
    <property type="evidence" value="ECO:0007669"/>
    <property type="project" value="UniProtKB-UniRule"/>
</dbReference>
<dbReference type="Gene3D" id="3.30.2300.20">
    <property type="match status" value="1"/>
</dbReference>
<dbReference type="Gene3D" id="3.30.70.2810">
    <property type="match status" value="1"/>
</dbReference>
<dbReference type="Gene3D" id="3.40.50.150">
    <property type="entry name" value="Vaccinia Virus protein VP39"/>
    <property type="match status" value="1"/>
</dbReference>
<dbReference type="HAMAP" id="MF_01551">
    <property type="entry name" value="23SrRNA_methyltr_M"/>
    <property type="match status" value="1"/>
</dbReference>
<dbReference type="InterPro" id="IPR040739">
    <property type="entry name" value="RlmM_FDX"/>
</dbReference>
<dbReference type="InterPro" id="IPR048646">
    <property type="entry name" value="RlmM_THUMP-like"/>
</dbReference>
<dbReference type="InterPro" id="IPR002877">
    <property type="entry name" value="RNA_MeTrfase_FtsJ_dom"/>
</dbReference>
<dbReference type="InterPro" id="IPR011224">
    <property type="entry name" value="rRNA_MeTrfase_M"/>
</dbReference>
<dbReference type="InterPro" id="IPR029063">
    <property type="entry name" value="SAM-dependent_MTases_sf"/>
</dbReference>
<dbReference type="NCBIfam" id="NF008734">
    <property type="entry name" value="PRK11760.1"/>
    <property type="match status" value="1"/>
</dbReference>
<dbReference type="PANTHER" id="PTHR37524">
    <property type="entry name" value="RIBOSOMAL RNA LARGE SUBUNIT METHYLTRANSFERASE M"/>
    <property type="match status" value="1"/>
</dbReference>
<dbReference type="PANTHER" id="PTHR37524:SF2">
    <property type="entry name" value="RIBOSOMAL RNA METHYLTRANSFERASE FTSJ DOMAIN-CONTAINING PROTEIN"/>
    <property type="match status" value="1"/>
</dbReference>
<dbReference type="Pfam" id="PF01728">
    <property type="entry name" value="FtsJ"/>
    <property type="match status" value="1"/>
</dbReference>
<dbReference type="Pfam" id="PF18125">
    <property type="entry name" value="RlmM_FDX"/>
    <property type="match status" value="1"/>
</dbReference>
<dbReference type="Pfam" id="PF21239">
    <property type="entry name" value="RLMM_N"/>
    <property type="match status" value="1"/>
</dbReference>
<dbReference type="PIRSF" id="PIRSF028774">
    <property type="entry name" value="UCP028774"/>
    <property type="match status" value="1"/>
</dbReference>
<dbReference type="SUPFAM" id="SSF53335">
    <property type="entry name" value="S-adenosyl-L-methionine-dependent methyltransferases"/>
    <property type="match status" value="1"/>
</dbReference>
<sequence length="361" mass="41980">MNKLALYCRSGFEKELAAEITEKATALGVFGFARVVENSGYVIFECYQIGEADLLARKITFSQLIFARQLIVVSDLISNLSVQDRISPIIEYYRQQEKILNLKQSSDIWVETADTNEAKTRAAFCRKFTVPLRQAFRKQGWLQAKNKKSGITLHIFFTQSNSCYIGYSYNNNHAEHIMGIPRLKFPAEAPSRSTLKLEEAILYFIPPNQEATRFNENKYAVDLGACPGGWTYQLVRRGVFVYAVDHGKMATSLHETGRIEHCAEDGFKFRPPKHCKIDWLVCDMVEQPRRIADLISQWLVKGWCKETIFNLKLPMKKRYFEVKRCLQQIKERLNEQHISFQIQAKHLYHDREEITVYIRLM</sequence>